<name>IAP_ASFM1</name>
<protein>
    <recommendedName>
        <fullName>Inhibitor of apoptosis protein</fullName>
        <shortName>IAP</shortName>
    </recommendedName>
</protein>
<evidence type="ECO:0000250" key="1">
    <source>
        <dbReference type="UniProtKB" id="P69180"/>
    </source>
</evidence>
<evidence type="ECO:0000255" key="2">
    <source>
        <dbReference type="PROSITE-ProRule" id="PRU00029"/>
    </source>
</evidence>
<evidence type="ECO:0000305" key="3"/>
<accession>O11452</accession>
<dbReference type="EMBL" id="U91737">
    <property type="protein sequence ID" value="AAB58392.1"/>
    <property type="molecule type" value="Genomic_DNA"/>
</dbReference>
<dbReference type="SMR" id="O11452"/>
<dbReference type="GO" id="GO:0030430">
    <property type="term" value="C:host cell cytoplasm"/>
    <property type="evidence" value="ECO:0007669"/>
    <property type="project" value="UniProtKB-SubCell"/>
</dbReference>
<dbReference type="GO" id="GO:0044423">
    <property type="term" value="C:virion component"/>
    <property type="evidence" value="ECO:0007669"/>
    <property type="project" value="UniProtKB-KW"/>
</dbReference>
<dbReference type="GO" id="GO:0046872">
    <property type="term" value="F:metal ion binding"/>
    <property type="evidence" value="ECO:0007669"/>
    <property type="project" value="UniProtKB-KW"/>
</dbReference>
<dbReference type="GO" id="GO:0085033">
    <property type="term" value="P:symbiont-mediated activation of host NF-kappaB cascade"/>
    <property type="evidence" value="ECO:0007669"/>
    <property type="project" value="UniProtKB-KW"/>
</dbReference>
<dbReference type="GO" id="GO:0033668">
    <property type="term" value="P:symbiont-mediated suppression of host apoptosis"/>
    <property type="evidence" value="ECO:0007669"/>
    <property type="project" value="UniProtKB-KW"/>
</dbReference>
<dbReference type="CDD" id="cd00022">
    <property type="entry name" value="BIR"/>
    <property type="match status" value="1"/>
</dbReference>
<dbReference type="FunFam" id="1.10.1170.10:FF:000014">
    <property type="entry name" value="IAP-like protein p27"/>
    <property type="match status" value="1"/>
</dbReference>
<dbReference type="Gene3D" id="1.10.1170.10">
    <property type="entry name" value="Inhibitor Of Apoptosis Protein (2mihbC-IAP-1), Chain A"/>
    <property type="match status" value="1"/>
</dbReference>
<dbReference type="InterPro" id="IPR010549">
    <property type="entry name" value="ASFV_p27_C"/>
</dbReference>
<dbReference type="InterPro" id="IPR001370">
    <property type="entry name" value="BIR_rpt"/>
</dbReference>
<dbReference type="Pfam" id="PF06556">
    <property type="entry name" value="ASFV_p27"/>
    <property type="match status" value="1"/>
</dbReference>
<dbReference type="Pfam" id="PF00653">
    <property type="entry name" value="BIR"/>
    <property type="match status" value="1"/>
</dbReference>
<dbReference type="SMART" id="SM00238">
    <property type="entry name" value="BIR"/>
    <property type="match status" value="1"/>
</dbReference>
<dbReference type="SUPFAM" id="SSF57924">
    <property type="entry name" value="Inhibitor of apoptosis (IAP) repeat"/>
    <property type="match status" value="1"/>
</dbReference>
<dbReference type="PROSITE" id="PS01282">
    <property type="entry name" value="BIR_REPEAT_1"/>
    <property type="match status" value="1"/>
</dbReference>
<dbReference type="PROSITE" id="PS50143">
    <property type="entry name" value="BIR_REPEAT_2"/>
    <property type="match status" value="1"/>
</dbReference>
<organism>
    <name type="scientific">African swine fever virus (isolate Tick/South Africa/Wildebeeslaagte M1/1996)</name>
    <name type="common">ASFV</name>
    <dbReference type="NCBI Taxonomy" id="82816"/>
    <lineage>
        <taxon>Viruses</taxon>
        <taxon>Varidnaviria</taxon>
        <taxon>Bamfordvirae</taxon>
        <taxon>Nucleocytoviricota</taxon>
        <taxon>Pokkesviricetes</taxon>
        <taxon>Asfuvirales</taxon>
        <taxon>Asfarviridae</taxon>
        <taxon>Asfivirus</taxon>
        <taxon>African swine fever virus</taxon>
    </lineage>
</organism>
<reference key="1">
    <citation type="journal article" date="1997" name="Virology">
        <title>A BIR motif containing gene of African swine fever virus, 4CL, is nonessential for growth in vitro and viral virulence.</title>
        <authorList>
            <person name="Neilan J.G."/>
            <person name="Lu Z."/>
            <person name="Kutish G.F."/>
            <person name="Zsak L."/>
            <person name="Burrage T.G."/>
            <person name="Borca M.V."/>
            <person name="Carrillo C."/>
            <person name="Rock D.L."/>
        </authorList>
    </citation>
    <scope>NUCLEOTIDE SEQUENCE [GENOMIC DNA]</scope>
</reference>
<comment type="function">
    <text evidence="1">Prevents apoptosis of host cell by inhibiting caspase-3/CASP3 activation to promote the viral replication. Also induces the activation of host NF-kappaB.</text>
</comment>
<comment type="subunit">
    <text evidence="1">Interacts with subunit p17 of host CASP3.</text>
</comment>
<comment type="subcellular location">
    <subcellularLocation>
        <location evidence="1">Host cytoplasm</location>
    </subcellularLocation>
    <subcellularLocation>
        <location evidence="1">Virion</location>
    </subcellularLocation>
    <text evidence="1">Probably accumulates in the perinuclear cytoplasmic viral factories. Found in association with viral nucleoid.</text>
</comment>
<comment type="induction">
    <text evidence="3">Expressed in the late phase of the viral replicative cycle.</text>
</comment>
<comment type="similarity">
    <text evidence="3">Belongs to the asfivirus IAP family.</text>
</comment>
<feature type="chain" id="PRO_0000122381" description="Inhibitor of apoptosis protein">
    <location>
        <begin position="1"/>
        <end position="224"/>
    </location>
</feature>
<feature type="repeat" description="BIR">
    <location>
        <begin position="29"/>
        <end position="92"/>
    </location>
</feature>
<feature type="binding site" evidence="2">
    <location>
        <position position="62"/>
    </location>
    <ligand>
        <name>Zn(2+)</name>
        <dbReference type="ChEBI" id="CHEBI:29105"/>
    </ligand>
</feature>
<feature type="binding site" evidence="2">
    <location>
        <position position="65"/>
    </location>
    <ligand>
        <name>Zn(2+)</name>
        <dbReference type="ChEBI" id="CHEBI:29105"/>
    </ligand>
</feature>
<feature type="binding site" evidence="2">
    <location>
        <position position="82"/>
    </location>
    <ligand>
        <name>Zn(2+)</name>
        <dbReference type="ChEBI" id="CHEBI:29105"/>
    </ligand>
</feature>
<feature type="binding site" evidence="2">
    <location>
        <position position="89"/>
    </location>
    <ligand>
        <name>Zn(2+)</name>
        <dbReference type="ChEBI" id="CHEBI:29105"/>
    </ligand>
</feature>
<organismHost>
    <name type="scientific">Ornithodoros</name>
    <name type="common">relapsing fever ticks</name>
    <dbReference type="NCBI Taxonomy" id="6937"/>
</organismHost>
<organismHost>
    <name type="scientific">Phacochoerus aethiopicus</name>
    <name type="common">Warthog</name>
    <dbReference type="NCBI Taxonomy" id="85517"/>
</organismHost>
<organismHost>
    <name type="scientific">Phacochoerus africanus</name>
    <name type="common">Warthog</name>
    <dbReference type="NCBI Taxonomy" id="41426"/>
</organismHost>
<organismHost>
    <name type="scientific">Potamochoerus larvatus</name>
    <name type="common">Bushpig</name>
    <dbReference type="NCBI Taxonomy" id="273792"/>
</organismHost>
<organismHost>
    <name type="scientific">Sus scrofa</name>
    <name type="common">Pig</name>
    <dbReference type="NCBI Taxonomy" id="9823"/>
</organismHost>
<keyword id="KW-1074">Activation of host NF-kappa-B by virus</keyword>
<keyword id="KW-1035">Host cytoplasm</keyword>
<keyword id="KW-0945">Host-virus interaction</keyword>
<keyword id="KW-1085">Inhibition of host caspases by virus</keyword>
<keyword id="KW-0426">Late protein</keyword>
<keyword id="KW-0479">Metal-binding</keyword>
<keyword id="KW-1119">Modulation of host cell apoptosis by virus</keyword>
<keyword id="KW-0946">Virion</keyword>
<keyword id="KW-0862">Zinc</keyword>
<sequence>MFPKINTIDPYISLRLFEVKPKYVGYSSVDARNQSFAIHDIKNYEKFSNAGLFYTSPTEITCYCCGMKFCNWLYEKHPLQVHAFWSRNCGFMRATLGIIGLKKMIDSYNDYYNNEVFVKHKNRVYTHKRLEDMGFSKPFMQFILANAFIPPYRKYIHKIILNDRYFTFKFAAHLLSFHKVNLDNQTTYCMTCGIEPIKKDENFCNACKTLNYKHYKTLNFSVKL</sequence>
<gene>
    <name type="primary">p27</name>
    <name type="ORF">4CL</name>
</gene>
<proteinExistence type="inferred from homology"/>